<accession>A5UA05</accession>
<protein>
    <recommendedName>
        <fullName evidence="1">ATP synthase subunit a</fullName>
    </recommendedName>
    <alternativeName>
        <fullName evidence="1">ATP synthase F0 sector subunit a</fullName>
    </alternativeName>
    <alternativeName>
        <fullName evidence="1">F-ATPase subunit 6</fullName>
    </alternativeName>
</protein>
<proteinExistence type="inferred from homology"/>
<keyword id="KW-0066">ATP synthesis</keyword>
<keyword id="KW-0997">Cell inner membrane</keyword>
<keyword id="KW-1003">Cell membrane</keyword>
<keyword id="KW-0138">CF(0)</keyword>
<keyword id="KW-0375">Hydrogen ion transport</keyword>
<keyword id="KW-0406">Ion transport</keyword>
<keyword id="KW-0472">Membrane</keyword>
<keyword id="KW-0812">Transmembrane</keyword>
<keyword id="KW-1133">Transmembrane helix</keyword>
<keyword id="KW-0813">Transport</keyword>
<comment type="function">
    <text evidence="1">Key component of the proton channel; it plays a direct role in the translocation of protons across the membrane.</text>
</comment>
<comment type="subunit">
    <text evidence="1">F-type ATPases have 2 components, CF(1) - the catalytic core - and CF(0) - the membrane proton channel. CF(1) has five subunits: alpha(3), beta(3), gamma(1), delta(1), epsilon(1). CF(0) has three main subunits: a(1), b(2) and c(9-12). The alpha and beta chains form an alternating ring which encloses part of the gamma chain. CF(1) is attached to CF(0) by a central stalk formed by the gamma and epsilon chains, while a peripheral stalk is formed by the delta and b chains.</text>
</comment>
<comment type="subcellular location">
    <subcellularLocation>
        <location evidence="1">Cell inner membrane</location>
        <topology evidence="1">Multi-pass membrane protein</topology>
    </subcellularLocation>
</comment>
<comment type="similarity">
    <text evidence="1">Belongs to the ATPase A chain family.</text>
</comment>
<sequence>MFGQTTSEYISHHLSFLKTGDGFWNVHIDTLFFSILAAVIFLFVFSRVGKKATTGVPGKMQCLVEIVVEWVNGIVKENFHGPRNVVAPLALTIFCWVFIMNAIDLIPVDFLPQFAGLFGIHYLRAVPTADISATLGMSICVFFLILFYTIKSKGFKGLVKEYTLHPFNHWAFIPVNFILETVTLLAKPISLAFRLFGNMYAGELIFILIAVMYSANMAIAALGIPLHLAWAIFHILVITLQAFIFMMLTVVYLSIAYNKADH</sequence>
<reference key="1">
    <citation type="journal article" date="2007" name="Genome Biol.">
        <title>Characterization and modeling of the Haemophilus influenzae core and supragenomes based on the complete genomic sequences of Rd and 12 clinical nontypeable strains.</title>
        <authorList>
            <person name="Hogg J.S."/>
            <person name="Hu F.Z."/>
            <person name="Janto B."/>
            <person name="Boissy R."/>
            <person name="Hayes J."/>
            <person name="Keefe R."/>
            <person name="Post J.C."/>
            <person name="Ehrlich G.D."/>
        </authorList>
    </citation>
    <scope>NUCLEOTIDE SEQUENCE [LARGE SCALE GENOMIC DNA]</scope>
    <source>
        <strain>PittEE</strain>
    </source>
</reference>
<dbReference type="EMBL" id="CP000671">
    <property type="protein sequence ID" value="ABQ97606.1"/>
    <property type="molecule type" value="Genomic_DNA"/>
</dbReference>
<dbReference type="SMR" id="A5UA05"/>
<dbReference type="KEGG" id="hip:CGSHiEE_00560"/>
<dbReference type="HOGENOM" id="CLU_041018_1_0_6"/>
<dbReference type="GO" id="GO:0005886">
    <property type="term" value="C:plasma membrane"/>
    <property type="evidence" value="ECO:0007669"/>
    <property type="project" value="UniProtKB-SubCell"/>
</dbReference>
<dbReference type="GO" id="GO:0045259">
    <property type="term" value="C:proton-transporting ATP synthase complex"/>
    <property type="evidence" value="ECO:0007669"/>
    <property type="project" value="UniProtKB-KW"/>
</dbReference>
<dbReference type="GO" id="GO:0046933">
    <property type="term" value="F:proton-transporting ATP synthase activity, rotational mechanism"/>
    <property type="evidence" value="ECO:0007669"/>
    <property type="project" value="UniProtKB-UniRule"/>
</dbReference>
<dbReference type="GO" id="GO:0042777">
    <property type="term" value="P:proton motive force-driven plasma membrane ATP synthesis"/>
    <property type="evidence" value="ECO:0007669"/>
    <property type="project" value="TreeGrafter"/>
</dbReference>
<dbReference type="CDD" id="cd00310">
    <property type="entry name" value="ATP-synt_Fo_a_6"/>
    <property type="match status" value="1"/>
</dbReference>
<dbReference type="FunFam" id="1.20.120.220:FF:000002">
    <property type="entry name" value="ATP synthase subunit a"/>
    <property type="match status" value="1"/>
</dbReference>
<dbReference type="Gene3D" id="1.20.120.220">
    <property type="entry name" value="ATP synthase, F0 complex, subunit A"/>
    <property type="match status" value="1"/>
</dbReference>
<dbReference type="HAMAP" id="MF_01393">
    <property type="entry name" value="ATP_synth_a_bact"/>
    <property type="match status" value="1"/>
</dbReference>
<dbReference type="InterPro" id="IPR045082">
    <property type="entry name" value="ATP_syn_F0_a_bact/chloroplast"/>
</dbReference>
<dbReference type="InterPro" id="IPR000568">
    <property type="entry name" value="ATP_synth_F0_asu"/>
</dbReference>
<dbReference type="InterPro" id="IPR023011">
    <property type="entry name" value="ATP_synth_F0_asu_AS"/>
</dbReference>
<dbReference type="InterPro" id="IPR035908">
    <property type="entry name" value="F0_ATP_A_sf"/>
</dbReference>
<dbReference type="NCBIfam" id="TIGR01131">
    <property type="entry name" value="ATP_synt_6_or_A"/>
    <property type="match status" value="1"/>
</dbReference>
<dbReference type="NCBIfam" id="NF004477">
    <property type="entry name" value="PRK05815.1-1"/>
    <property type="match status" value="1"/>
</dbReference>
<dbReference type="PANTHER" id="PTHR42823">
    <property type="entry name" value="ATP SYNTHASE SUBUNIT A, CHLOROPLASTIC"/>
    <property type="match status" value="1"/>
</dbReference>
<dbReference type="PANTHER" id="PTHR42823:SF3">
    <property type="entry name" value="ATP SYNTHASE SUBUNIT A, CHLOROPLASTIC"/>
    <property type="match status" value="1"/>
</dbReference>
<dbReference type="Pfam" id="PF00119">
    <property type="entry name" value="ATP-synt_A"/>
    <property type="match status" value="1"/>
</dbReference>
<dbReference type="PRINTS" id="PR00123">
    <property type="entry name" value="ATPASEA"/>
</dbReference>
<dbReference type="SUPFAM" id="SSF81336">
    <property type="entry name" value="F1F0 ATP synthase subunit A"/>
    <property type="match status" value="1"/>
</dbReference>
<dbReference type="PROSITE" id="PS00449">
    <property type="entry name" value="ATPASE_A"/>
    <property type="match status" value="1"/>
</dbReference>
<name>ATP6_HAEIE</name>
<organism>
    <name type="scientific">Haemophilus influenzae (strain PittEE)</name>
    <dbReference type="NCBI Taxonomy" id="374930"/>
    <lineage>
        <taxon>Bacteria</taxon>
        <taxon>Pseudomonadati</taxon>
        <taxon>Pseudomonadota</taxon>
        <taxon>Gammaproteobacteria</taxon>
        <taxon>Pasteurellales</taxon>
        <taxon>Pasteurellaceae</taxon>
        <taxon>Haemophilus</taxon>
    </lineage>
</organism>
<evidence type="ECO:0000255" key="1">
    <source>
        <dbReference type="HAMAP-Rule" id="MF_01393"/>
    </source>
</evidence>
<feature type="chain" id="PRO_0000362321" description="ATP synthase subunit a">
    <location>
        <begin position="1"/>
        <end position="262"/>
    </location>
</feature>
<feature type="transmembrane region" description="Helical" evidence="1">
    <location>
        <begin position="26"/>
        <end position="46"/>
    </location>
</feature>
<feature type="transmembrane region" description="Helical" evidence="1">
    <location>
        <begin position="86"/>
        <end position="106"/>
    </location>
</feature>
<feature type="transmembrane region" description="Helical" evidence="1">
    <location>
        <begin position="130"/>
        <end position="150"/>
    </location>
</feature>
<feature type="transmembrane region" description="Helical" evidence="1">
    <location>
        <begin position="204"/>
        <end position="226"/>
    </location>
</feature>
<feature type="transmembrane region" description="Helical" evidence="1">
    <location>
        <begin position="240"/>
        <end position="260"/>
    </location>
</feature>
<gene>
    <name evidence="1" type="primary">atpB</name>
    <name type="ordered locus">CGSHiEE_00560</name>
</gene>